<reference key="1">
    <citation type="journal article" date="2008" name="ISME J.">
        <title>Comparative genomics of two ecotypes of the marine planktonic copiotroph Alteromonas macleodii suggests alternative lifestyles associated with different kinds of particulate organic matter.</title>
        <authorList>
            <person name="Ivars-Martinez E."/>
            <person name="Martin-Cuadrado A.-B."/>
            <person name="D'Auria G."/>
            <person name="Mira A."/>
            <person name="Ferriera S."/>
            <person name="Johnson J."/>
            <person name="Friedman R."/>
            <person name="Rodriguez-Valera F."/>
        </authorList>
    </citation>
    <scope>NUCLEOTIDE SEQUENCE [LARGE SCALE GENOMIC DNA]</scope>
    <source>
        <strain>DSM 17117 / CIP 110805 / LMG 28347 / Deep ecotype</strain>
    </source>
</reference>
<feature type="chain" id="PRO_0000404304" description="Regulator of ribonuclease activity B">
    <location>
        <begin position="1"/>
        <end position="132"/>
    </location>
</feature>
<organism>
    <name type="scientific">Alteromonas mediterranea (strain DSM 17117 / CIP 110805 / LMG 28347 / Deep ecotype)</name>
    <dbReference type="NCBI Taxonomy" id="1774373"/>
    <lineage>
        <taxon>Bacteria</taxon>
        <taxon>Pseudomonadati</taxon>
        <taxon>Pseudomonadota</taxon>
        <taxon>Gammaproteobacteria</taxon>
        <taxon>Alteromonadales</taxon>
        <taxon>Alteromonadaceae</taxon>
        <taxon>Alteromonas/Salinimonas group</taxon>
        <taxon>Alteromonas</taxon>
    </lineage>
</organism>
<accession>B4RWP8</accession>
<accession>F2G2N2</accession>
<keyword id="KW-0963">Cytoplasm</keyword>
<sequence length="132" mass="15238">MNQFDEREEWYAFNQETIDALLEDGSQADADYTIEHHFASTDFDVLEKAAVDAFKAGFEVTDAEELMLDDGETIFCFDAVVERKLDIEKLNADADALLKIADKHDVTYDGWGTYFEPREEGEYEEEEHHLND</sequence>
<gene>
    <name evidence="1" type="primary">rraB</name>
    <name type="ordered locus">MADE_1016015</name>
</gene>
<evidence type="ECO:0000255" key="1">
    <source>
        <dbReference type="HAMAP-Rule" id="MF_01888"/>
    </source>
</evidence>
<name>RRAB_ALTMD</name>
<comment type="function">
    <text evidence="1">Globally modulates RNA abundance by binding to RNase E (Rne) and regulating its endonucleolytic activity. Can modulate Rne action in a substrate-dependent manner by altering the composition of the degradosome.</text>
</comment>
<comment type="subunit">
    <text evidence="1">Interacts with the C-terminal region of Rne.</text>
</comment>
<comment type="subcellular location">
    <subcellularLocation>
        <location evidence="1">Cytoplasm</location>
    </subcellularLocation>
</comment>
<comment type="similarity">
    <text evidence="1">Belongs to the RraB family.</text>
</comment>
<protein>
    <recommendedName>
        <fullName evidence="1">Regulator of ribonuclease activity B</fullName>
    </recommendedName>
</protein>
<dbReference type="EMBL" id="CP001103">
    <property type="protein sequence ID" value="AEA99333.1"/>
    <property type="molecule type" value="Genomic_DNA"/>
</dbReference>
<dbReference type="RefSeq" id="WP_012519625.1">
    <property type="nucleotide sequence ID" value="NC_011138.3"/>
</dbReference>
<dbReference type="SMR" id="B4RWP8"/>
<dbReference type="GeneID" id="56343476"/>
<dbReference type="KEGG" id="amc:MADE_1016015"/>
<dbReference type="HOGENOM" id="CLU_128640_0_0_6"/>
<dbReference type="Proteomes" id="UP000001870">
    <property type="component" value="Chromosome"/>
</dbReference>
<dbReference type="GO" id="GO:0005737">
    <property type="term" value="C:cytoplasm"/>
    <property type="evidence" value="ECO:0007669"/>
    <property type="project" value="UniProtKB-SubCell"/>
</dbReference>
<dbReference type="GO" id="GO:0060698">
    <property type="term" value="F:endoribonuclease inhibitor activity"/>
    <property type="evidence" value="ECO:0007669"/>
    <property type="project" value="UniProtKB-UniRule"/>
</dbReference>
<dbReference type="GO" id="GO:0019899">
    <property type="term" value="F:enzyme binding"/>
    <property type="evidence" value="ECO:0007669"/>
    <property type="project" value="UniProtKB-UniRule"/>
</dbReference>
<dbReference type="Gene3D" id="3.30.70.970">
    <property type="entry name" value="RraB-like"/>
    <property type="match status" value="1"/>
</dbReference>
<dbReference type="HAMAP" id="MF_01888">
    <property type="entry name" value="RraB"/>
    <property type="match status" value="1"/>
</dbReference>
<dbReference type="InterPro" id="IPR016716">
    <property type="entry name" value="RraB"/>
</dbReference>
<dbReference type="InterPro" id="IPR036701">
    <property type="entry name" value="RraB-like_sf"/>
</dbReference>
<dbReference type="InterPro" id="IPR009671">
    <property type="entry name" value="RraB_dom"/>
</dbReference>
<dbReference type="NCBIfam" id="NF008393">
    <property type="entry name" value="PRK11191.1"/>
    <property type="match status" value="1"/>
</dbReference>
<dbReference type="Pfam" id="PF06877">
    <property type="entry name" value="RraB"/>
    <property type="match status" value="1"/>
</dbReference>
<dbReference type="PIRSF" id="PIRSF018193">
    <property type="entry name" value="UCP018193"/>
    <property type="match status" value="1"/>
</dbReference>
<dbReference type="SUPFAM" id="SSF89946">
    <property type="entry name" value="Hypothetical protein VC0424"/>
    <property type="match status" value="1"/>
</dbReference>
<proteinExistence type="inferred from homology"/>